<sequence>MGPSVRPGFLVVVIGLQFVAASMEVNSRKFEPMVAFICNKPAMHRVPSGWVPDDDPAKSCVKQPEEILEYCKKLYPDHDITNVLQASYKVTIPNWCGFNVTHCHKHGNHTVRPFRCLVGPFQSEALLVPEHCIFDHYHDPRVCNEFDQCNETAMSKCSARGMTTQSFAMLWPCQEPGHFSGVEFVCCPKVSLIPESTEAPKSSPPTPAKTENGLDDYTAYLKGDSKYMSKYANEHERFKAAEKVMQQFQRERDTKMMKDWKAARDSVREKKKTDPKKAMELNKELTERYQKIYHAYEQESIAEKKQLVNTHQQHIQSWLNNRKQVLMEKLQDALLAKPPKKSKIEKAATAYIKVEEKDKMHTYNHFQHLRDTDPEDAANIQDRVLEHLNLIDDRIRRVLDWLKRDPEIEKQVRPNIDKFMAKYKDINANSMKLLLRQEPTPKEAPVETQKAEDYSEEDEAAVTGTANKVKPTEARPEQQEDIKTPGFDSETFEDERPAIAEQTIHDLPNHRKKGYIAHVQQQPMIADEVSLDNLYANSHANSVLGIAIGGVVVFIIIVVAVVMLKRRTQRQRVTHGFVEVDPAASPEERHVANMQMSGYENPTYKYFEMQNQ</sequence>
<proteinExistence type="evidence at protein level"/>
<accession>Q06BR2</accession>
<reference evidence="10" key="1">
    <citation type="journal article" date="2006" name="Proc. Natl. Acad. Sci. U.S.A.">
        <title>A peptide zipcode sufficient for anterograde transport within amyloid precursor protein.</title>
        <authorList>
            <person name="Satpute-Krishnan P."/>
            <person name="DeGiorgis J.A."/>
            <person name="Conley M.P."/>
            <person name="Jang M."/>
            <person name="Bearer E.L."/>
        </authorList>
    </citation>
    <scope>NUCLEOTIDE SEQUENCE [MRNA]</scope>
    <scope>FUNCTION</scope>
    <scope>SUBCELLULAR LOCATION</scope>
    <scope>TISSUE SPECIFICITY</scope>
    <source>
        <tissue evidence="10">Cervicothoracic ganglion</tissue>
    </source>
</reference>
<reference evidence="9" key="2">
    <citation type="journal article" date="2012" name="Phys. Biol.">
        <title>Quantitative measurements and modeling of cargo-motor interactions during fast transport in the living axon.</title>
        <authorList>
            <person name="Seamster P.E."/>
            <person name="Loewenberg M."/>
            <person name="Pascal J."/>
            <person name="Chauviere A."/>
            <person name="Gonzales A."/>
            <person name="Cristini V."/>
            <person name="Bearer E.L."/>
        </authorList>
    </citation>
    <scope>INTERACTION WITH KINESIN HEAVY CHAIN</scope>
</reference>
<organism evidence="10">
    <name type="scientific">Doryteuthis pealeii</name>
    <name type="common">Longfin inshore squid</name>
    <name type="synonym">Loligo pealeii</name>
    <dbReference type="NCBI Taxonomy" id="1051067"/>
    <lineage>
        <taxon>Eukaryota</taxon>
        <taxon>Metazoa</taxon>
        <taxon>Spiralia</taxon>
        <taxon>Lophotrochozoa</taxon>
        <taxon>Mollusca</taxon>
        <taxon>Cephalopoda</taxon>
        <taxon>Coleoidea</taxon>
        <taxon>Decapodiformes</taxon>
        <taxon>Myopsida</taxon>
        <taxon>Loliginidae</taxon>
        <taxon>Doryteuthis</taxon>
    </lineage>
</organism>
<feature type="signal peptide" evidence="2">
    <location>
        <begin position="1"/>
        <end position="21"/>
    </location>
</feature>
<feature type="chain" id="PRO_5004165090" description="Amyloid-beta precursor-like protein" evidence="2">
    <location>
        <begin position="22"/>
        <end position="612"/>
    </location>
</feature>
<feature type="topological domain" description="Extracellular" evidence="9">
    <location>
        <begin position="22"/>
        <end position="542"/>
    </location>
</feature>
<feature type="transmembrane region" description="Helical" evidence="2">
    <location>
        <begin position="543"/>
        <end position="563"/>
    </location>
</feature>
<feature type="topological domain" description="Cytoplasmic" evidence="9">
    <location>
        <begin position="564"/>
        <end position="612"/>
    </location>
</feature>
<feature type="domain" description="E1" evidence="4">
    <location>
        <begin position="28"/>
        <end position="189"/>
    </location>
</feature>
<feature type="domain" description="E2" evidence="5">
    <location>
        <begin position="223"/>
        <end position="419"/>
    </location>
</feature>
<feature type="region of interest" description="GFLD subdomain" evidence="4">
    <location>
        <begin position="28"/>
        <end position="122"/>
    </location>
</feature>
<feature type="region of interest" description="CuBD subdomain" evidence="4">
    <location>
        <begin position="130"/>
        <end position="189"/>
    </location>
</feature>
<feature type="region of interest" description="Disordered" evidence="6">
    <location>
        <begin position="251"/>
        <end position="276"/>
    </location>
</feature>
<feature type="region of interest" description="Disordered" evidence="6">
    <location>
        <begin position="437"/>
        <end position="490"/>
    </location>
</feature>
<feature type="region of interest" description="Required for the interaction with kinesin heavy chain and for anterograde transport in axons" evidence="7 8">
    <location>
        <begin position="598"/>
        <end position="612"/>
    </location>
</feature>
<feature type="short sequence motif" description="YENPXY motif" evidence="1">
    <location>
        <begin position="599"/>
        <end position="604"/>
    </location>
</feature>
<feature type="compositionally biased region" description="Basic and acidic residues" evidence="6">
    <location>
        <begin position="439"/>
        <end position="453"/>
    </location>
</feature>
<feature type="compositionally biased region" description="Basic and acidic residues" evidence="6">
    <location>
        <begin position="470"/>
        <end position="483"/>
    </location>
</feature>
<feature type="glycosylation site" description="N-linked (GlcNAc...) asparagine" evidence="3">
    <location>
        <position position="99"/>
    </location>
</feature>
<feature type="glycosylation site" description="N-linked (GlcNAc...) asparagine" evidence="3">
    <location>
        <position position="108"/>
    </location>
</feature>
<feature type="glycosylation site" description="N-linked (GlcNAc...) asparagine" evidence="3">
    <location>
        <position position="150"/>
    </location>
</feature>
<feature type="disulfide bond" evidence="4">
    <location>
        <begin position="38"/>
        <end position="60"/>
    </location>
</feature>
<feature type="disulfide bond" evidence="4">
    <location>
        <begin position="71"/>
        <end position="116"/>
    </location>
</feature>
<feature type="disulfide bond" evidence="4">
    <location>
        <begin position="96"/>
        <end position="103"/>
    </location>
</feature>
<feature type="disulfide bond" evidence="4">
    <location>
        <begin position="132"/>
        <end position="187"/>
    </location>
</feature>
<feature type="disulfide bond" evidence="4">
    <location>
        <begin position="143"/>
        <end position="173"/>
    </location>
</feature>
<feature type="disulfide bond" evidence="4">
    <location>
        <begin position="157"/>
        <end position="186"/>
    </location>
</feature>
<dbReference type="EMBL" id="DQ913735">
    <property type="protein sequence ID" value="ABI84193.2"/>
    <property type="molecule type" value="mRNA"/>
</dbReference>
<dbReference type="SMR" id="Q06BR2"/>
<dbReference type="GO" id="GO:0030424">
    <property type="term" value="C:axon"/>
    <property type="evidence" value="ECO:0007669"/>
    <property type="project" value="UniProtKB-SubCell"/>
</dbReference>
<dbReference type="GO" id="GO:0005886">
    <property type="term" value="C:plasma membrane"/>
    <property type="evidence" value="ECO:0007669"/>
    <property type="project" value="UniProtKB-SubCell"/>
</dbReference>
<dbReference type="GO" id="GO:0008201">
    <property type="term" value="F:heparin binding"/>
    <property type="evidence" value="ECO:0007669"/>
    <property type="project" value="InterPro"/>
</dbReference>
<dbReference type="GO" id="GO:0046914">
    <property type="term" value="F:transition metal ion binding"/>
    <property type="evidence" value="ECO:0007669"/>
    <property type="project" value="InterPro"/>
</dbReference>
<dbReference type="GO" id="GO:0007409">
    <property type="term" value="P:axonogenesis"/>
    <property type="evidence" value="ECO:0007669"/>
    <property type="project" value="TreeGrafter"/>
</dbReference>
<dbReference type="GO" id="GO:0007417">
    <property type="term" value="P:central nervous system development"/>
    <property type="evidence" value="ECO:0007669"/>
    <property type="project" value="TreeGrafter"/>
</dbReference>
<dbReference type="Gene3D" id="1.20.120.770">
    <property type="entry name" value="Amyloid precursor protein, E2 domain"/>
    <property type="match status" value="1"/>
</dbReference>
<dbReference type="Gene3D" id="3.30.1490.140">
    <property type="entry name" value="Amyloidogenic glycoprotein, copper-binding domain"/>
    <property type="match status" value="1"/>
</dbReference>
<dbReference type="Gene3D" id="3.90.570.10">
    <property type="entry name" value="Amyloidogenic glycoprotein, heparin-binding domain"/>
    <property type="match status" value="1"/>
</dbReference>
<dbReference type="Gene3D" id="2.30.29.30">
    <property type="entry name" value="Pleckstrin-homology domain (PH domain)/Phosphotyrosine-binding domain (PTB)"/>
    <property type="match status" value="1"/>
</dbReference>
<dbReference type="InterPro" id="IPR036669">
    <property type="entry name" value="Amyloid_Cu-bd_sf"/>
</dbReference>
<dbReference type="InterPro" id="IPR008155">
    <property type="entry name" value="Amyloid_glyco"/>
</dbReference>
<dbReference type="InterPro" id="IPR011178">
    <property type="entry name" value="Amyloid_glyco_Cu-bd"/>
</dbReference>
<dbReference type="InterPro" id="IPR024329">
    <property type="entry name" value="Amyloid_glyco_E2_domain"/>
</dbReference>
<dbReference type="InterPro" id="IPR008154">
    <property type="entry name" value="Amyloid_glyco_extra"/>
</dbReference>
<dbReference type="InterPro" id="IPR015849">
    <property type="entry name" value="Amyloid_glyco_heparin-bd"/>
</dbReference>
<dbReference type="InterPro" id="IPR036454">
    <property type="entry name" value="Amyloid_glyco_heparin-bd_sf"/>
</dbReference>
<dbReference type="InterPro" id="IPR019745">
    <property type="entry name" value="Amyloid_glyco_intracell_CS"/>
</dbReference>
<dbReference type="InterPro" id="IPR019543">
    <property type="entry name" value="APP_amyloid_C"/>
</dbReference>
<dbReference type="InterPro" id="IPR019744">
    <property type="entry name" value="APP_CUBD_CS"/>
</dbReference>
<dbReference type="InterPro" id="IPR036176">
    <property type="entry name" value="E2_sf"/>
</dbReference>
<dbReference type="InterPro" id="IPR011993">
    <property type="entry name" value="PH-like_dom_sf"/>
</dbReference>
<dbReference type="PANTHER" id="PTHR23103">
    <property type="entry name" value="ALZHEIMER'S DISEASE BETA-AMYLOID RELATED"/>
    <property type="match status" value="1"/>
</dbReference>
<dbReference type="PANTHER" id="PTHR23103:SF15">
    <property type="entry name" value="AMYLOID-BETA-LIKE PROTEIN"/>
    <property type="match status" value="1"/>
</dbReference>
<dbReference type="Pfam" id="PF10515">
    <property type="entry name" value="APP_amyloid"/>
    <property type="match status" value="1"/>
</dbReference>
<dbReference type="Pfam" id="PF12924">
    <property type="entry name" value="APP_Cu_bd"/>
    <property type="match status" value="1"/>
</dbReference>
<dbReference type="Pfam" id="PF12925">
    <property type="entry name" value="APP_E2"/>
    <property type="match status" value="1"/>
</dbReference>
<dbReference type="Pfam" id="PF02177">
    <property type="entry name" value="APP_N"/>
    <property type="match status" value="1"/>
</dbReference>
<dbReference type="PRINTS" id="PR00203">
    <property type="entry name" value="AMYLOIDA4"/>
</dbReference>
<dbReference type="SMART" id="SM00006">
    <property type="entry name" value="A4_EXTRA"/>
    <property type="match status" value="1"/>
</dbReference>
<dbReference type="SUPFAM" id="SSF56491">
    <property type="entry name" value="A heparin-binding domain"/>
    <property type="match status" value="1"/>
</dbReference>
<dbReference type="SUPFAM" id="SSF89811">
    <property type="entry name" value="Amyloid beta a4 protein copper binding domain (domain 2)"/>
    <property type="match status" value="1"/>
</dbReference>
<dbReference type="SUPFAM" id="SSF109843">
    <property type="entry name" value="CAPPD, an extracellular domain of amyloid beta A4 protein"/>
    <property type="match status" value="1"/>
</dbReference>
<dbReference type="PROSITE" id="PS00319">
    <property type="entry name" value="APP_CUBD"/>
    <property type="match status" value="1"/>
</dbReference>
<dbReference type="PROSITE" id="PS51869">
    <property type="entry name" value="APP_E1"/>
    <property type="match status" value="1"/>
</dbReference>
<dbReference type="PROSITE" id="PS51870">
    <property type="entry name" value="APP_E2"/>
    <property type="match status" value="1"/>
</dbReference>
<dbReference type="PROSITE" id="PS00320">
    <property type="entry name" value="APP_INTRA"/>
    <property type="match status" value="1"/>
</dbReference>
<keyword id="KW-1003">Cell membrane</keyword>
<keyword id="KW-0966">Cell projection</keyword>
<keyword id="KW-1015">Disulfide bond</keyword>
<keyword id="KW-0325">Glycoprotein</keyword>
<keyword id="KW-0472">Membrane</keyword>
<keyword id="KW-0732">Signal</keyword>
<keyword id="KW-0812">Transmembrane</keyword>
<keyword id="KW-1133">Transmembrane helix</keyword>
<evidence type="ECO:0000250" key="1">
    <source>
        <dbReference type="UniProtKB" id="P05067"/>
    </source>
</evidence>
<evidence type="ECO:0000255" key="2"/>
<evidence type="ECO:0000255" key="3">
    <source>
        <dbReference type="PROSITE-ProRule" id="PRU00498"/>
    </source>
</evidence>
<evidence type="ECO:0000255" key="4">
    <source>
        <dbReference type="PROSITE-ProRule" id="PRU01217"/>
    </source>
</evidence>
<evidence type="ECO:0000255" key="5">
    <source>
        <dbReference type="PROSITE-ProRule" id="PRU01218"/>
    </source>
</evidence>
<evidence type="ECO:0000256" key="6">
    <source>
        <dbReference type="SAM" id="MobiDB-lite"/>
    </source>
</evidence>
<evidence type="ECO:0000269" key="7">
    <source>
    </source>
</evidence>
<evidence type="ECO:0000269" key="8">
    <source>
    </source>
</evidence>
<evidence type="ECO:0000305" key="9"/>
<evidence type="ECO:0000312" key="10">
    <source>
        <dbReference type="EMBL" id="ABI84193.2"/>
    </source>
</evidence>
<protein>
    <recommendedName>
        <fullName evidence="9">Amyloid-beta precursor-like protein</fullName>
    </recommendedName>
</protein>
<comment type="function">
    <text evidence="7">Acts as a kinesin I membrane receptor, thereby playing a role in axonal anterograde transport of cargo towards synapses in axons.</text>
</comment>
<comment type="subunit">
    <text evidence="8">Interacts (via cytoplasmic domain) with kinesin heavy chain.</text>
</comment>
<comment type="subcellular location">
    <subcellularLocation>
        <location evidence="9">Cell membrane</location>
        <topology evidence="2">Single-pass type I membrane protein</topology>
    </subcellularLocation>
    <subcellularLocation>
        <location evidence="7">Cell projection</location>
        <location evidence="7">Axon</location>
    </subcellularLocation>
</comment>
<comment type="tissue specificity">
    <text evidence="7">Expressed in the cervicothoracic ganglion (stellate ganglion) (at protein level).</text>
</comment>
<comment type="similarity">
    <text evidence="4 5">Belongs to the APP family.</text>
</comment>
<name>A4_DORPE</name>